<sequence>MTSRPQIHVHDAKEANKQTATKLTLPAVFTAPIRTDIVHKVFTDLNKNRKQASGVKISTRGTAGMGHSAESWGTGRAVARIPRVGGSGTHRSGQAAFGNQCRKGRMFAPLKTYRRVHRRVNVNQKRHAVAAALAASALVPLVFARGHRISNVQELPYVFDDSVESYEKTKQAVAFLKRVGAYDDVLRVAETKALRAGQGKLRNRRYKLRRGPLVVYGNEKSTLTRALRNIPGVDVCNVNRLNLLQLAPGGHVGRFIIWTESAFKKLNEIFGTYSTTGVQKSGYQLQRPLLANADIARIINSNEVQSVVKVAGTTETHERKKNPLTNNNALFKLNPAAKIVKEQAKKAAEASKAKRQATLKANRKAAKTHKKGSQAWIAAFNKANEEAIAKARQEDADFIAQGQEIKEGDE</sequence>
<dbReference type="EMBL" id="GG662666">
    <property type="protein sequence ID" value="EAR97243.2"/>
    <property type="molecule type" value="Genomic_DNA"/>
</dbReference>
<dbReference type="RefSeq" id="XP_001017488.2">
    <property type="nucleotide sequence ID" value="XM_001017488.3"/>
</dbReference>
<dbReference type="PDB" id="4V8P">
    <property type="method" value="X-ray"/>
    <property type="resolution" value="3.52 A"/>
    <property type="chains" value="BC/CC/EC/GC=1-410"/>
</dbReference>
<dbReference type="PDBsum" id="4V8P"/>
<dbReference type="SMR" id="P0DJ55"/>
<dbReference type="FunCoup" id="P0DJ55">
    <property type="interactions" value="390"/>
</dbReference>
<dbReference type="IntAct" id="P0DJ55">
    <property type="interactions" value="1"/>
</dbReference>
<dbReference type="STRING" id="312017.P0DJ55"/>
<dbReference type="EnsemblProtists" id="EAR97243">
    <property type="protein sequence ID" value="EAR97243"/>
    <property type="gene ID" value="TTHERM_00333210"/>
</dbReference>
<dbReference type="GeneID" id="7828093"/>
<dbReference type="KEGG" id="tet:TTHERM_00333210"/>
<dbReference type="eggNOG" id="KOG1475">
    <property type="taxonomic scope" value="Eukaryota"/>
</dbReference>
<dbReference type="HOGENOM" id="CLU_026535_4_0_1"/>
<dbReference type="InParanoid" id="P0DJ55"/>
<dbReference type="OMA" id="DYLEFEN"/>
<dbReference type="OrthoDB" id="10259785at2759"/>
<dbReference type="Proteomes" id="UP000009168">
    <property type="component" value="Unassembled WGS sequence"/>
</dbReference>
<dbReference type="GO" id="GO:0005737">
    <property type="term" value="C:cytoplasm"/>
    <property type="evidence" value="ECO:0007669"/>
    <property type="project" value="UniProtKB-SubCell"/>
</dbReference>
<dbReference type="GO" id="GO:1990904">
    <property type="term" value="C:ribonucleoprotein complex"/>
    <property type="evidence" value="ECO:0007669"/>
    <property type="project" value="UniProtKB-KW"/>
</dbReference>
<dbReference type="GO" id="GO:0005840">
    <property type="term" value="C:ribosome"/>
    <property type="evidence" value="ECO:0007669"/>
    <property type="project" value="UniProtKB-KW"/>
</dbReference>
<dbReference type="GO" id="GO:0003735">
    <property type="term" value="F:structural constituent of ribosome"/>
    <property type="evidence" value="ECO:0007669"/>
    <property type="project" value="InterPro"/>
</dbReference>
<dbReference type="GO" id="GO:0006412">
    <property type="term" value="P:translation"/>
    <property type="evidence" value="ECO:0007669"/>
    <property type="project" value="InterPro"/>
</dbReference>
<dbReference type="FunFam" id="3.40.1370.10:FF:000011">
    <property type="entry name" value="50S ribosomal protein L4"/>
    <property type="match status" value="1"/>
</dbReference>
<dbReference type="Gene3D" id="3.40.1370.10">
    <property type="match status" value="1"/>
</dbReference>
<dbReference type="Gene3D" id="6.10.250.1240">
    <property type="match status" value="1"/>
</dbReference>
<dbReference type="InterPro" id="IPR025755">
    <property type="entry name" value="Ribos_uL4_C_dom"/>
</dbReference>
<dbReference type="InterPro" id="IPR002136">
    <property type="entry name" value="Ribosomal_uL4"/>
</dbReference>
<dbReference type="InterPro" id="IPR023574">
    <property type="entry name" value="Ribosomal_uL4_dom_sf"/>
</dbReference>
<dbReference type="InterPro" id="IPR013000">
    <property type="entry name" value="Ribosomal_uL4_euk/arc_CS"/>
</dbReference>
<dbReference type="InterPro" id="IPR045240">
    <property type="entry name" value="Ribosomal_uL4_euk/arch"/>
</dbReference>
<dbReference type="PANTHER" id="PTHR19431">
    <property type="entry name" value="60S RIBOSOMAL PROTEIN L4"/>
    <property type="match status" value="1"/>
</dbReference>
<dbReference type="Pfam" id="PF14374">
    <property type="entry name" value="Ribos_L4_asso_C"/>
    <property type="match status" value="1"/>
</dbReference>
<dbReference type="Pfam" id="PF00573">
    <property type="entry name" value="Ribosomal_L4"/>
    <property type="match status" value="1"/>
</dbReference>
<dbReference type="SUPFAM" id="SSF52166">
    <property type="entry name" value="Ribosomal protein L4"/>
    <property type="match status" value="1"/>
</dbReference>
<dbReference type="PROSITE" id="PS00939">
    <property type="entry name" value="RIBOSOMAL_L1E"/>
    <property type="match status" value="1"/>
</dbReference>
<comment type="subcellular location">
    <subcellularLocation>
        <location evidence="1">Cytoplasm</location>
    </subcellularLocation>
</comment>
<comment type="similarity">
    <text evidence="2">Belongs to the universal ribosomal protein uL4 family.</text>
</comment>
<protein>
    <recommendedName>
        <fullName evidence="2">Large ribosomal subunit protein uL4</fullName>
    </recommendedName>
    <alternativeName>
        <fullName>60S ribosomal protein L4</fullName>
    </alternativeName>
</protein>
<proteinExistence type="evidence at protein level"/>
<name>RL4_TETTS</name>
<accession>P0DJ55</accession>
<evidence type="ECO:0000250" key="1"/>
<evidence type="ECO:0000305" key="2"/>
<organism>
    <name type="scientific">Tetrahymena thermophila (strain SB210)</name>
    <dbReference type="NCBI Taxonomy" id="312017"/>
    <lineage>
        <taxon>Eukaryota</taxon>
        <taxon>Sar</taxon>
        <taxon>Alveolata</taxon>
        <taxon>Ciliophora</taxon>
        <taxon>Intramacronucleata</taxon>
        <taxon>Oligohymenophorea</taxon>
        <taxon>Hymenostomatida</taxon>
        <taxon>Tetrahymenina</taxon>
        <taxon>Tetrahymenidae</taxon>
        <taxon>Tetrahymena</taxon>
    </lineage>
</organism>
<gene>
    <name type="primary">RPL4</name>
    <name type="ORF">TTHERM_00333210</name>
</gene>
<feature type="chain" id="PRO_0000413490" description="Large ribosomal subunit protein uL4">
    <location>
        <begin position="1"/>
        <end position="410"/>
    </location>
</feature>
<keyword id="KW-0002">3D-structure</keyword>
<keyword id="KW-0963">Cytoplasm</keyword>
<keyword id="KW-1185">Reference proteome</keyword>
<keyword id="KW-0687">Ribonucleoprotein</keyword>
<keyword id="KW-0689">Ribosomal protein</keyword>
<reference key="1">
    <citation type="journal article" date="2006" name="PLoS Biol.">
        <title>Macronuclear genome sequence of the ciliate Tetrahymena thermophila, a model eukaryote.</title>
        <authorList>
            <person name="Eisen J.A."/>
            <person name="Coyne R.S."/>
            <person name="Wu M."/>
            <person name="Wu D."/>
            <person name="Thiagarajan M."/>
            <person name="Wortman J.R."/>
            <person name="Badger J.H."/>
            <person name="Ren Q."/>
            <person name="Amedeo P."/>
            <person name="Jones K.M."/>
            <person name="Tallon L.J."/>
            <person name="Delcher A.L."/>
            <person name="Salzberg S.L."/>
            <person name="Silva J.C."/>
            <person name="Haas B.J."/>
            <person name="Majoros W.H."/>
            <person name="Farzad M."/>
            <person name="Carlton J.M."/>
            <person name="Smith R.K. Jr."/>
            <person name="Garg J."/>
            <person name="Pearlman R.E."/>
            <person name="Karrer K.M."/>
            <person name="Sun L."/>
            <person name="Manning G."/>
            <person name="Elde N.C."/>
            <person name="Turkewitz A.P."/>
            <person name="Asai D.J."/>
            <person name="Wilkes D.E."/>
            <person name="Wang Y."/>
            <person name="Cai H."/>
            <person name="Collins K."/>
            <person name="Stewart B.A."/>
            <person name="Lee S.R."/>
            <person name="Wilamowska K."/>
            <person name="Weinberg Z."/>
            <person name="Ruzzo W.L."/>
            <person name="Wloga D."/>
            <person name="Gaertig J."/>
            <person name="Frankel J."/>
            <person name="Tsao C.-C."/>
            <person name="Gorovsky M.A."/>
            <person name="Keeling P.J."/>
            <person name="Waller R.F."/>
            <person name="Patron N.J."/>
            <person name="Cherry J.M."/>
            <person name="Stover N.A."/>
            <person name="Krieger C.J."/>
            <person name="del Toro C."/>
            <person name="Ryder H.F."/>
            <person name="Williamson S.C."/>
            <person name="Barbeau R.A."/>
            <person name="Hamilton E.P."/>
            <person name="Orias E."/>
        </authorList>
    </citation>
    <scope>NUCLEOTIDE SEQUENCE [LARGE SCALE GENOMIC DNA]</scope>
    <source>
        <strain>SB210</strain>
    </source>
</reference>
<reference key="2">
    <citation type="journal article" date="2011" name="Science">
        <title>Crystal structure of the eukaryotic 60S ribosomal subunit in complex with initiation factor 6.</title>
        <authorList>
            <person name="Klinge S."/>
            <person name="Voigts-Hoffmann F."/>
            <person name="Leibundgut M."/>
            <person name="Arpagaus S."/>
            <person name="Ban N."/>
        </authorList>
    </citation>
    <scope>X-RAY CRYSTALLOGRAPHY (3.52 ANGSTROMS) OF 60S RIBOSOME</scope>
</reference>